<sequence>MERGGYRGGRGDGRGRGGRGYGGGGGGGEQGRDRGYGGGEQGRGRGSERGGGNRGQGRGEQQDFRSQSQRGPPPGHGGRGTTQFQQPRPQVAPQPSQAPASYAGSVGGVAGRGAWGRKPQVPSDSASPSTSTTVVSEPVRVAEVMNLKPSVQVATSDRKEPMKRPDRGGVVAVRRVNLYVNHYKVNFNPESVIRHYDVEIKGEIPTKKVSRFELAMVRDKVFTDNPDEFPLAMTAYDGQKNIFSAVELPTGSYKVEYPKTEEMRGRSYTFTIKQVNVLKLGDLKEYMTGRSSFNPRDVLQGMDVVMKEHPSKCMITVGKSFFTRETEPDEDFRFGVIAAKGYRHTLKPTAQGLSLCLDYSVLAFRKAMSVIEYLKLYFNWSDMRQFRRRDVEEELIGLKVTVNHRKNKQKLTIVGLSMQNTKDIKFDLIDQEGNEPPRKTSIVEYFRIKYGRHIVHKDIPCLDLGKNGRQNFVPMEFCDLVEGQIYPKDNLDKDSALWLKKLSLVNPQQRQRNIDKMIKARNGPSGGEIIGNFGLKVDTNMTPVEGRVLKAPSLKLAERGRVVREEPNPRQNNQWNLMKKGVTRGSIVKHWAVLDFTASERFNKMPNDFVDNLIDRCWRLGMQMEAPIVYKTSRMETLSNGNAIEELLRSVIDEASRKHGGARPTLVLCAMSRKDDGYKTLKWIAETKLGLVTQCFLTGPATKGGDQYRANLALKMNAKVGGSNVELMDTFSFFKKEDEVMFIGADVNHPAARDKMSPSIVAVVGTLNWPEANRYAARVIAQPHRKEEIQGFGDACLELVKAHVQATGKRPNKIVIFRDGVSDAQFDMVLNVELLDVKLTFEKNGYNPKITVIVAQKRHQTRFFPATNNDGSDKGNVPSGTVVDTKVIHPYEYDFYLCSHHGGIGTSKPTHYYTLWDELGFTSDQVQKLIFEMCFTFTRCTKPVSLVPPVYYADMVAFRGRMYHEASSREKNFKQPRGASTSAASLASSLSSLTIEDKAIFKLHAELENVMFFV</sequence>
<keyword id="KW-0002">3D-structure</keyword>
<keyword id="KW-0611">Plant defense</keyword>
<keyword id="KW-1185">Reference proteome</keyword>
<keyword id="KW-0678">Repressor</keyword>
<keyword id="KW-0687">Ribonucleoprotein</keyword>
<keyword id="KW-0694">RNA-binding</keyword>
<keyword id="KW-0943">RNA-mediated gene silencing</keyword>
<keyword id="KW-0804">Transcription</keyword>
<keyword id="KW-0805">Transcription regulation</keyword>
<keyword id="KW-0810">Translation regulation</keyword>
<name>AGO2_ARATH</name>
<protein>
    <recommendedName>
        <fullName>Protein argonaute 2</fullName>
    </recommendedName>
</protein>
<evidence type="ECO:0000255" key="1"/>
<evidence type="ECO:0000255" key="2">
    <source>
        <dbReference type="PROSITE-ProRule" id="PRU00142"/>
    </source>
</evidence>
<evidence type="ECO:0000255" key="3">
    <source>
        <dbReference type="PROSITE-ProRule" id="PRU00150"/>
    </source>
</evidence>
<evidence type="ECO:0000256" key="4">
    <source>
        <dbReference type="SAM" id="MobiDB-lite"/>
    </source>
</evidence>
<evidence type="ECO:0000269" key="5">
    <source>
    </source>
</evidence>
<evidence type="ECO:0000269" key="6">
    <source>
    </source>
</evidence>
<evidence type="ECO:0000269" key="7">
    <source>
    </source>
</evidence>
<evidence type="ECO:0000269" key="8">
    <source>
    </source>
</evidence>
<evidence type="ECO:0000269" key="9">
    <source>
    </source>
</evidence>
<evidence type="ECO:0000305" key="10"/>
<evidence type="ECO:0007829" key="11">
    <source>
        <dbReference type="PDB" id="4G0M"/>
    </source>
</evidence>
<feature type="chain" id="PRO_0000404665" description="Protein argonaute 2">
    <location>
        <begin position="1"/>
        <end position="1014"/>
    </location>
</feature>
<feature type="domain" description="PAZ" evidence="2">
    <location>
        <begin position="369"/>
        <end position="482"/>
    </location>
</feature>
<feature type="domain" description="Piwi" evidence="3">
    <location>
        <begin position="666"/>
        <end position="965"/>
    </location>
</feature>
<feature type="region of interest" description="Disordered" evidence="4">
    <location>
        <begin position="1"/>
        <end position="137"/>
    </location>
</feature>
<feature type="region of interest" description="Interaction with guide RNA" evidence="1">
    <location>
        <begin position="857"/>
        <end position="858"/>
    </location>
</feature>
<feature type="region of interest" description="Interaction with guide RNA" evidence="1">
    <location>
        <begin position="900"/>
        <end position="908"/>
    </location>
</feature>
<feature type="region of interest" description="Interaction with guide RNA" evidence="1">
    <location>
        <begin position="937"/>
        <end position="959"/>
    </location>
</feature>
<feature type="compositionally biased region" description="Basic and acidic residues" evidence="4">
    <location>
        <begin position="1"/>
        <end position="15"/>
    </location>
</feature>
<feature type="compositionally biased region" description="Gly residues" evidence="4">
    <location>
        <begin position="18"/>
        <end position="29"/>
    </location>
</feature>
<feature type="compositionally biased region" description="Gly residues" evidence="4">
    <location>
        <begin position="49"/>
        <end position="58"/>
    </location>
</feature>
<feature type="compositionally biased region" description="Low complexity" evidence="4">
    <location>
        <begin position="83"/>
        <end position="104"/>
    </location>
</feature>
<feature type="compositionally biased region" description="Gly residues" evidence="4">
    <location>
        <begin position="105"/>
        <end position="114"/>
    </location>
</feature>
<feature type="compositionally biased region" description="Low complexity" evidence="4">
    <location>
        <begin position="121"/>
        <end position="137"/>
    </location>
</feature>
<feature type="sequence conflict" description="In Ref. 3; AAO64849 and 4; BAC43071." evidence="10" ref="3 4">
    <original>K</original>
    <variation>R</variation>
    <location>
        <position position="658"/>
    </location>
</feature>
<feature type="strand" evidence="11">
    <location>
        <begin position="590"/>
        <end position="595"/>
    </location>
</feature>
<feature type="turn" evidence="11">
    <location>
        <begin position="596"/>
        <end position="600"/>
    </location>
</feature>
<feature type="helix" evidence="11">
    <location>
        <begin position="609"/>
        <end position="619"/>
    </location>
</feature>
<feature type="strand" evidence="11">
    <location>
        <begin position="628"/>
        <end position="632"/>
    </location>
</feature>
<feature type="helix" evidence="11">
    <location>
        <begin position="635"/>
        <end position="639"/>
    </location>
</feature>
<feature type="helix" evidence="11">
    <location>
        <begin position="641"/>
        <end position="658"/>
    </location>
</feature>
<feature type="turn" evidence="11">
    <location>
        <begin position="659"/>
        <end position="661"/>
    </location>
</feature>
<feature type="strand" evidence="11">
    <location>
        <begin position="666"/>
        <end position="673"/>
    </location>
</feature>
<feature type="helix" evidence="11">
    <location>
        <begin position="677"/>
        <end position="687"/>
    </location>
</feature>
<feature type="strand" evidence="11">
    <location>
        <begin position="692"/>
        <end position="697"/>
    </location>
</feature>
<feature type="helix" evidence="11">
    <location>
        <begin position="698"/>
        <end position="701"/>
    </location>
</feature>
<feature type="strand" evidence="11">
    <location>
        <begin position="702"/>
        <end position="704"/>
    </location>
</feature>
<feature type="helix" evidence="11">
    <location>
        <begin position="706"/>
        <end position="719"/>
    </location>
</feature>
<organism>
    <name type="scientific">Arabidopsis thaliana</name>
    <name type="common">Mouse-ear cress</name>
    <dbReference type="NCBI Taxonomy" id="3702"/>
    <lineage>
        <taxon>Eukaryota</taxon>
        <taxon>Viridiplantae</taxon>
        <taxon>Streptophyta</taxon>
        <taxon>Embryophyta</taxon>
        <taxon>Tracheophyta</taxon>
        <taxon>Spermatophyta</taxon>
        <taxon>Magnoliopsida</taxon>
        <taxon>eudicotyledons</taxon>
        <taxon>Gunneridae</taxon>
        <taxon>Pentapetalae</taxon>
        <taxon>rosids</taxon>
        <taxon>malvids</taxon>
        <taxon>Brassicales</taxon>
        <taxon>Brassicaceae</taxon>
        <taxon>Camelineae</taxon>
        <taxon>Arabidopsis</taxon>
    </lineage>
</organism>
<reference key="1">
    <citation type="journal article" date="2000" name="Nature">
        <title>Sequence and analysis of chromosome 1 of the plant Arabidopsis thaliana.</title>
        <authorList>
            <person name="Theologis A."/>
            <person name="Ecker J.R."/>
            <person name="Palm C.J."/>
            <person name="Federspiel N.A."/>
            <person name="Kaul S."/>
            <person name="White O."/>
            <person name="Alonso J."/>
            <person name="Altafi H."/>
            <person name="Araujo R."/>
            <person name="Bowman C.L."/>
            <person name="Brooks S.Y."/>
            <person name="Buehler E."/>
            <person name="Chan A."/>
            <person name="Chao Q."/>
            <person name="Chen H."/>
            <person name="Cheuk R.F."/>
            <person name="Chin C.W."/>
            <person name="Chung M.K."/>
            <person name="Conn L."/>
            <person name="Conway A.B."/>
            <person name="Conway A.R."/>
            <person name="Creasy T.H."/>
            <person name="Dewar K."/>
            <person name="Dunn P."/>
            <person name="Etgu P."/>
            <person name="Feldblyum T.V."/>
            <person name="Feng J.-D."/>
            <person name="Fong B."/>
            <person name="Fujii C.Y."/>
            <person name="Gill J.E."/>
            <person name="Goldsmith A.D."/>
            <person name="Haas B."/>
            <person name="Hansen N.F."/>
            <person name="Hughes B."/>
            <person name="Huizar L."/>
            <person name="Hunter J.L."/>
            <person name="Jenkins J."/>
            <person name="Johnson-Hopson C."/>
            <person name="Khan S."/>
            <person name="Khaykin E."/>
            <person name="Kim C.J."/>
            <person name="Koo H.L."/>
            <person name="Kremenetskaia I."/>
            <person name="Kurtz D.B."/>
            <person name="Kwan A."/>
            <person name="Lam B."/>
            <person name="Langin-Hooper S."/>
            <person name="Lee A."/>
            <person name="Lee J.M."/>
            <person name="Lenz C.A."/>
            <person name="Li J.H."/>
            <person name="Li Y.-P."/>
            <person name="Lin X."/>
            <person name="Liu S.X."/>
            <person name="Liu Z.A."/>
            <person name="Luros J.S."/>
            <person name="Maiti R."/>
            <person name="Marziali A."/>
            <person name="Militscher J."/>
            <person name="Miranda M."/>
            <person name="Nguyen M."/>
            <person name="Nierman W.C."/>
            <person name="Osborne B.I."/>
            <person name="Pai G."/>
            <person name="Peterson J."/>
            <person name="Pham P.K."/>
            <person name="Rizzo M."/>
            <person name="Rooney T."/>
            <person name="Rowley D."/>
            <person name="Sakano H."/>
            <person name="Salzberg S.L."/>
            <person name="Schwartz J.R."/>
            <person name="Shinn P."/>
            <person name="Southwick A.M."/>
            <person name="Sun H."/>
            <person name="Tallon L.J."/>
            <person name="Tambunga G."/>
            <person name="Toriumi M.J."/>
            <person name="Town C.D."/>
            <person name="Utterback T."/>
            <person name="Van Aken S."/>
            <person name="Vaysberg M."/>
            <person name="Vysotskaia V.S."/>
            <person name="Walker M."/>
            <person name="Wu D."/>
            <person name="Yu G."/>
            <person name="Fraser C.M."/>
            <person name="Venter J.C."/>
            <person name="Davis R.W."/>
        </authorList>
    </citation>
    <scope>NUCLEOTIDE SEQUENCE [LARGE SCALE GENOMIC DNA]</scope>
    <source>
        <strain>cv. Columbia</strain>
    </source>
</reference>
<reference key="2">
    <citation type="journal article" date="2017" name="Plant J.">
        <title>Araport11: a complete reannotation of the Arabidopsis thaliana reference genome.</title>
        <authorList>
            <person name="Cheng C.Y."/>
            <person name="Krishnakumar V."/>
            <person name="Chan A.P."/>
            <person name="Thibaud-Nissen F."/>
            <person name="Schobel S."/>
            <person name="Town C.D."/>
        </authorList>
    </citation>
    <scope>GENOME REANNOTATION</scope>
    <source>
        <strain>cv. Columbia</strain>
    </source>
</reference>
<reference key="3">
    <citation type="journal article" date="2003" name="Science">
        <title>Empirical analysis of transcriptional activity in the Arabidopsis genome.</title>
        <authorList>
            <person name="Yamada K."/>
            <person name="Lim J."/>
            <person name="Dale J.M."/>
            <person name="Chen H."/>
            <person name="Shinn P."/>
            <person name="Palm C.J."/>
            <person name="Southwick A.M."/>
            <person name="Wu H.C."/>
            <person name="Kim C.J."/>
            <person name="Nguyen M."/>
            <person name="Pham P.K."/>
            <person name="Cheuk R.F."/>
            <person name="Karlin-Newmann G."/>
            <person name="Liu S.X."/>
            <person name="Lam B."/>
            <person name="Sakano H."/>
            <person name="Wu T."/>
            <person name="Yu G."/>
            <person name="Miranda M."/>
            <person name="Quach H.L."/>
            <person name="Tripp M."/>
            <person name="Chang C.H."/>
            <person name="Lee J.M."/>
            <person name="Toriumi M.J."/>
            <person name="Chan M.M."/>
            <person name="Tang C.C."/>
            <person name="Onodera C.S."/>
            <person name="Deng J.M."/>
            <person name="Akiyama K."/>
            <person name="Ansari Y."/>
            <person name="Arakawa T."/>
            <person name="Banh J."/>
            <person name="Banno F."/>
            <person name="Bowser L."/>
            <person name="Brooks S.Y."/>
            <person name="Carninci P."/>
            <person name="Chao Q."/>
            <person name="Choy N."/>
            <person name="Enju A."/>
            <person name="Goldsmith A.D."/>
            <person name="Gurjal M."/>
            <person name="Hansen N.F."/>
            <person name="Hayashizaki Y."/>
            <person name="Johnson-Hopson C."/>
            <person name="Hsuan V.W."/>
            <person name="Iida K."/>
            <person name="Karnes M."/>
            <person name="Khan S."/>
            <person name="Koesema E."/>
            <person name="Ishida J."/>
            <person name="Jiang P.X."/>
            <person name="Jones T."/>
            <person name="Kawai J."/>
            <person name="Kamiya A."/>
            <person name="Meyers C."/>
            <person name="Nakajima M."/>
            <person name="Narusaka M."/>
            <person name="Seki M."/>
            <person name="Sakurai T."/>
            <person name="Satou M."/>
            <person name="Tamse R."/>
            <person name="Vaysberg M."/>
            <person name="Wallender E.K."/>
            <person name="Wong C."/>
            <person name="Yamamura Y."/>
            <person name="Yuan S."/>
            <person name="Shinozaki K."/>
            <person name="Davis R.W."/>
            <person name="Theologis A."/>
            <person name="Ecker J.R."/>
        </authorList>
    </citation>
    <scope>NUCLEOTIDE SEQUENCE [LARGE SCALE MRNA] OF 444-1014</scope>
    <source>
        <strain>cv. Columbia</strain>
    </source>
</reference>
<reference key="4">
    <citation type="journal article" date="2002" name="Science">
        <title>Functional annotation of a full-length Arabidopsis cDNA collection.</title>
        <authorList>
            <person name="Seki M."/>
            <person name="Narusaka M."/>
            <person name="Kamiya A."/>
            <person name="Ishida J."/>
            <person name="Satou M."/>
            <person name="Sakurai T."/>
            <person name="Nakajima M."/>
            <person name="Enju A."/>
            <person name="Akiyama K."/>
            <person name="Oono Y."/>
            <person name="Muramatsu M."/>
            <person name="Hayashizaki Y."/>
            <person name="Kawai J."/>
            <person name="Carninci P."/>
            <person name="Itoh M."/>
            <person name="Ishii Y."/>
            <person name="Arakawa T."/>
            <person name="Shibata K."/>
            <person name="Shinagawa A."/>
            <person name="Shinozaki K."/>
        </authorList>
    </citation>
    <scope>NUCLEOTIDE SEQUENCE [LARGE SCALE MRNA] OF 475-1014</scope>
    <source>
        <strain>cv. Columbia</strain>
    </source>
</reference>
<reference key="5">
    <citation type="journal article" date="2007" name="Curr. Biol.">
        <title>The Polerovirus silencing suppressor P0 targets ARGONAUTE proteins for degradation.</title>
        <authorList>
            <person name="Baumberger N."/>
            <person name="Tsai C.-H."/>
            <person name="Lie M."/>
            <person name="Havecker E."/>
            <person name="Baulcombe D.C."/>
        </authorList>
    </citation>
    <scope>FUNCTION</scope>
</reference>
<reference key="6">
    <citation type="journal article" date="2008" name="Cell">
        <title>Sorting of small RNAs into Arabidopsis argonaute complexes is directed by the 5' terminal nucleotide.</title>
        <authorList>
            <person name="Mi S."/>
            <person name="Cai T."/>
            <person name="Hu Y."/>
            <person name="Chen Y."/>
            <person name="Hodges E."/>
            <person name="Ni F."/>
            <person name="Wu L."/>
            <person name="Li S."/>
            <person name="Zhou H."/>
            <person name="Long C."/>
            <person name="Chen S."/>
            <person name="Hannon G.J."/>
            <person name="Qi Y."/>
        </authorList>
    </citation>
    <scope>FUNCTION</scope>
    <scope>IDENTIFICATION BY MASS SPECTROMETRY</scope>
</reference>
<reference key="7">
    <citation type="journal article" date="2008" name="Cell">
        <title>Specificity of ARGONAUTE7-miR390 interaction and dual functionality in TAS3 trans-acting siRNA formation.</title>
        <authorList>
            <person name="Montgomery T.A."/>
            <person name="Howell M.D."/>
            <person name="Cuperus J.T."/>
            <person name="Li D."/>
            <person name="Hansen J.E."/>
            <person name="Alexander A.L."/>
            <person name="Chapman E.J."/>
            <person name="Fahlgren N."/>
            <person name="Allen E."/>
            <person name="Carrington J.C."/>
        </authorList>
    </citation>
    <scope>FUNCTION</scope>
</reference>
<reference key="8">
    <citation type="journal article" date="2008" name="Plant Cell Physiol.">
        <title>The mechanism selecting the guide strand from small RNA duplexes is different among argonaute proteins.</title>
        <authorList>
            <person name="Takeda A."/>
            <person name="Iwasaki S."/>
            <person name="Watanabe T."/>
            <person name="Utsumi M."/>
            <person name="Watanabe Y."/>
        </authorList>
    </citation>
    <scope>FUNCTION</scope>
</reference>
<reference key="9">
    <citation type="journal article" date="2012" name="Mol. Cell">
        <title>NERD, a plant-specific GW protein, defines an additional RNAi-dependent chromatin-based pathway in Arabidopsis.</title>
        <authorList>
            <person name="Pontier D."/>
            <person name="Picart C."/>
            <person name="Roudier F."/>
            <person name="Garcia D."/>
            <person name="Lahmy S."/>
            <person name="Azevedo J."/>
            <person name="Alart E."/>
            <person name="Laudie M."/>
            <person name="Karlowski W.M."/>
            <person name="Cooke R."/>
            <person name="Colot V."/>
            <person name="Voinnet O."/>
            <person name="Lagrange T."/>
        </authorList>
    </citation>
    <scope>FUNCTION</scope>
    <scope>INTERACTION WITH NERD</scope>
    <source>
        <strain>cv. Columbia</strain>
    </source>
</reference>
<reference key="10">
    <citation type="journal article" date="2012" name="EMBO J.">
        <title>Arabidopsis Argonaute MID domains use their nucleotide specificity loop to sort small RNAs.</title>
        <authorList>
            <person name="Frank F."/>
            <person name="Hauver J."/>
            <person name="Sonenberg N."/>
            <person name="Nagar B."/>
        </authorList>
    </citation>
    <scope>X-RAY CRYSTALLOGRAPHY (2.31 ANGSTROMS) OF 579-727</scope>
</reference>
<accession>Q9SHF3</accession>
<accession>Q8GX33</accession>
<proteinExistence type="evidence at protein level"/>
<comment type="function">
    <text evidence="5 6 7 8 9">Involved in RNA-mediated post-transcriptional gene silencing (PTGS). Main component of the RNA-induced silencing complex (RISC) that binds to a short guide RNA such as microRNA (miRNA) or small interfering RNA (siRNA). RISC uses the mature miRNA or siRNA as a guide for slicer-directed cleavage of homologous mRNAs to repress gene expression. Associates mainly with siRNAs of 21 nucleotide in length and preferentially recruits small RNAs with a 5' terminal adenosine. Probably involved in antiviral RNA silencing. Associates with siRNA derived from cucumber mosaic virus (CMV). Targeted by turnip yellows virus (TuYV) protein P0 (via F-box-like domain) for probable proteasome degradation and thereby inactivating AGO2 function in RNA silencing. Required to direct NERD-dependent DNA methylation and silencing.</text>
</comment>
<comment type="subunit">
    <text evidence="9">Interacts with NERD.</text>
</comment>
<comment type="similarity">
    <text evidence="10">Belongs to the argonaute family. Ago subfamily.</text>
</comment>
<comment type="sequence caution" evidence="10">
    <conflict type="erroneous initiation">
        <sequence resource="EMBL-CDS" id="AAO64849"/>
    </conflict>
    <text>Truncated N-terminus.</text>
</comment>
<dbReference type="EMBL" id="AC007654">
    <property type="protein sequence ID" value="AAF24585.1"/>
    <property type="molecule type" value="Genomic_DNA"/>
</dbReference>
<dbReference type="EMBL" id="CP002684">
    <property type="protein sequence ID" value="AEE31335.1"/>
    <property type="molecule type" value="Genomic_DNA"/>
</dbReference>
<dbReference type="EMBL" id="BT005914">
    <property type="protein sequence ID" value="AAO64849.1"/>
    <property type="status" value="ALT_INIT"/>
    <property type="molecule type" value="mRNA"/>
</dbReference>
<dbReference type="EMBL" id="AK118463">
    <property type="protein sequence ID" value="BAC43071.1"/>
    <property type="molecule type" value="mRNA"/>
</dbReference>
<dbReference type="PIR" id="H86438">
    <property type="entry name" value="H86438"/>
</dbReference>
<dbReference type="RefSeq" id="NP_174413.2">
    <property type="nucleotide sequence ID" value="NM_102866.3"/>
</dbReference>
<dbReference type="PDB" id="4G0M">
    <property type="method" value="X-ray"/>
    <property type="resolution" value="2.31 A"/>
    <property type="chains" value="A/B=579-727"/>
</dbReference>
<dbReference type="PDBsum" id="4G0M"/>
<dbReference type="SMR" id="Q9SHF3"/>
<dbReference type="BioGRID" id="25251">
    <property type="interactions" value="2"/>
</dbReference>
<dbReference type="FunCoup" id="Q9SHF3">
    <property type="interactions" value="207"/>
</dbReference>
<dbReference type="IntAct" id="Q9SHF3">
    <property type="interactions" value="1"/>
</dbReference>
<dbReference type="STRING" id="3702.Q9SHF3"/>
<dbReference type="iPTMnet" id="Q9SHF3"/>
<dbReference type="PaxDb" id="3702-AT1G31280.1"/>
<dbReference type="ProteomicsDB" id="244718"/>
<dbReference type="EnsemblPlants" id="AT1G31280.1">
    <property type="protein sequence ID" value="AT1G31280.1"/>
    <property type="gene ID" value="AT1G31280"/>
</dbReference>
<dbReference type="GeneID" id="840016"/>
<dbReference type="Gramene" id="AT1G31280.1">
    <property type="protein sequence ID" value="AT1G31280.1"/>
    <property type="gene ID" value="AT1G31280"/>
</dbReference>
<dbReference type="KEGG" id="ath:AT1G31280"/>
<dbReference type="Araport" id="AT1G31280"/>
<dbReference type="TAIR" id="AT1G31280">
    <property type="gene designation" value="AGO2"/>
</dbReference>
<dbReference type="eggNOG" id="KOG1041">
    <property type="taxonomic scope" value="Eukaryota"/>
</dbReference>
<dbReference type="HOGENOM" id="CLU_004544_3_0_1"/>
<dbReference type="InParanoid" id="Q9SHF3"/>
<dbReference type="OMA" id="LENTMFF"/>
<dbReference type="PhylomeDB" id="Q9SHF3"/>
<dbReference type="EvolutionaryTrace" id="Q9SHF3"/>
<dbReference type="PRO" id="PR:Q9SHF3"/>
<dbReference type="Proteomes" id="UP000006548">
    <property type="component" value="Chromosome 1"/>
</dbReference>
<dbReference type="ExpressionAtlas" id="Q9SHF3">
    <property type="expression patterns" value="baseline and differential"/>
</dbReference>
<dbReference type="GO" id="GO:0005829">
    <property type="term" value="C:cytosol"/>
    <property type="evidence" value="ECO:0000314"/>
    <property type="project" value="TAIR"/>
</dbReference>
<dbReference type="GO" id="GO:0005634">
    <property type="term" value="C:nucleus"/>
    <property type="evidence" value="ECO:0000314"/>
    <property type="project" value="TAIR"/>
</dbReference>
<dbReference type="GO" id="GO:1990904">
    <property type="term" value="C:ribonucleoprotein complex"/>
    <property type="evidence" value="ECO:0007669"/>
    <property type="project" value="UniProtKB-KW"/>
</dbReference>
<dbReference type="GO" id="GO:0003729">
    <property type="term" value="F:mRNA binding"/>
    <property type="evidence" value="ECO:0000314"/>
    <property type="project" value="TAIR"/>
</dbReference>
<dbReference type="GO" id="GO:0035197">
    <property type="term" value="F:siRNA binding"/>
    <property type="evidence" value="ECO:0000314"/>
    <property type="project" value="TAIR"/>
</dbReference>
<dbReference type="GO" id="GO:0042742">
    <property type="term" value="P:defense response to bacterium"/>
    <property type="evidence" value="ECO:0000315"/>
    <property type="project" value="TAIR"/>
</dbReference>
<dbReference type="GO" id="GO:0051607">
    <property type="term" value="P:defense response to virus"/>
    <property type="evidence" value="ECO:0000314"/>
    <property type="project" value="TAIR"/>
</dbReference>
<dbReference type="GO" id="GO:0006417">
    <property type="term" value="P:regulation of translation"/>
    <property type="evidence" value="ECO:0007669"/>
    <property type="project" value="UniProtKB-KW"/>
</dbReference>
<dbReference type="GO" id="GO:0031047">
    <property type="term" value="P:regulatory ncRNA-mediated gene silencing"/>
    <property type="evidence" value="ECO:0007669"/>
    <property type="project" value="UniProtKB-KW"/>
</dbReference>
<dbReference type="CDD" id="cd02846">
    <property type="entry name" value="PAZ_argonaute_like"/>
    <property type="match status" value="1"/>
</dbReference>
<dbReference type="CDD" id="cd04657">
    <property type="entry name" value="Piwi_ago-like"/>
    <property type="match status" value="1"/>
</dbReference>
<dbReference type="FunFam" id="3.40.50.2300:FF:000561">
    <property type="entry name" value="Protein argonaute 2"/>
    <property type="match status" value="1"/>
</dbReference>
<dbReference type="FunFam" id="3.30.420.10:FF:000091">
    <property type="entry name" value="Protein argonaute 3"/>
    <property type="match status" value="1"/>
</dbReference>
<dbReference type="FunFam" id="2.170.260.10:FF:000008">
    <property type="entry name" value="Protein argonaute 7"/>
    <property type="match status" value="1"/>
</dbReference>
<dbReference type="Gene3D" id="3.40.50.2300">
    <property type="match status" value="1"/>
</dbReference>
<dbReference type="Gene3D" id="2.170.260.10">
    <property type="entry name" value="paz domain"/>
    <property type="match status" value="1"/>
</dbReference>
<dbReference type="Gene3D" id="3.30.420.10">
    <property type="entry name" value="Ribonuclease H-like superfamily/Ribonuclease H"/>
    <property type="match status" value="1"/>
</dbReference>
<dbReference type="InterPro" id="IPR014811">
    <property type="entry name" value="ArgoL1"/>
</dbReference>
<dbReference type="InterPro" id="IPR032472">
    <property type="entry name" value="ArgoL2"/>
</dbReference>
<dbReference type="InterPro" id="IPR032474">
    <property type="entry name" value="Argonaute_N"/>
</dbReference>
<dbReference type="InterPro" id="IPR003100">
    <property type="entry name" value="PAZ_dom"/>
</dbReference>
<dbReference type="InterPro" id="IPR036085">
    <property type="entry name" value="PAZ_dom_sf"/>
</dbReference>
<dbReference type="InterPro" id="IPR003165">
    <property type="entry name" value="Piwi"/>
</dbReference>
<dbReference type="InterPro" id="IPR045246">
    <property type="entry name" value="Piwi_ago-like"/>
</dbReference>
<dbReference type="InterPro" id="IPR012337">
    <property type="entry name" value="RNaseH-like_sf"/>
</dbReference>
<dbReference type="InterPro" id="IPR036397">
    <property type="entry name" value="RNaseH_sf"/>
</dbReference>
<dbReference type="PANTHER" id="PTHR22891">
    <property type="entry name" value="EUKARYOTIC TRANSLATION INITIATION FACTOR 2C"/>
    <property type="match status" value="1"/>
</dbReference>
<dbReference type="Pfam" id="PF08699">
    <property type="entry name" value="ArgoL1"/>
    <property type="match status" value="1"/>
</dbReference>
<dbReference type="Pfam" id="PF16488">
    <property type="entry name" value="ArgoL2"/>
    <property type="match status" value="1"/>
</dbReference>
<dbReference type="Pfam" id="PF16486">
    <property type="entry name" value="ArgoN"/>
    <property type="match status" value="1"/>
</dbReference>
<dbReference type="Pfam" id="PF02170">
    <property type="entry name" value="PAZ"/>
    <property type="match status" value="1"/>
</dbReference>
<dbReference type="Pfam" id="PF02171">
    <property type="entry name" value="Piwi"/>
    <property type="match status" value="1"/>
</dbReference>
<dbReference type="SMART" id="SM01163">
    <property type="entry name" value="DUF1785"/>
    <property type="match status" value="1"/>
</dbReference>
<dbReference type="SMART" id="SM00949">
    <property type="entry name" value="PAZ"/>
    <property type="match status" value="1"/>
</dbReference>
<dbReference type="SMART" id="SM00950">
    <property type="entry name" value="Piwi"/>
    <property type="match status" value="1"/>
</dbReference>
<dbReference type="SUPFAM" id="SSF101690">
    <property type="entry name" value="PAZ domain"/>
    <property type="match status" value="1"/>
</dbReference>
<dbReference type="SUPFAM" id="SSF53098">
    <property type="entry name" value="Ribonuclease H-like"/>
    <property type="match status" value="1"/>
</dbReference>
<dbReference type="PROSITE" id="PS50821">
    <property type="entry name" value="PAZ"/>
    <property type="match status" value="1"/>
</dbReference>
<dbReference type="PROSITE" id="PS50822">
    <property type="entry name" value="PIWI"/>
    <property type="match status" value="1"/>
</dbReference>
<gene>
    <name type="primary">AGO2</name>
    <name type="ordered locus">At1g31280</name>
    <name type="ORF">T19E23.7</name>
</gene>